<evidence type="ECO:0000255" key="1">
    <source>
        <dbReference type="HAMAP-Rule" id="MF_01322"/>
    </source>
</evidence>
<comment type="function">
    <text evidence="1">DNA-dependent RNA polymerase catalyzes the transcription of DNA into RNA using the four ribonucleoside triphosphates as substrates.</text>
</comment>
<comment type="catalytic activity">
    <reaction evidence="1">
        <text>RNA(n) + a ribonucleoside 5'-triphosphate = RNA(n+1) + diphosphate</text>
        <dbReference type="Rhea" id="RHEA:21248"/>
        <dbReference type="Rhea" id="RHEA-COMP:14527"/>
        <dbReference type="Rhea" id="RHEA-COMP:17342"/>
        <dbReference type="ChEBI" id="CHEBI:33019"/>
        <dbReference type="ChEBI" id="CHEBI:61557"/>
        <dbReference type="ChEBI" id="CHEBI:140395"/>
        <dbReference type="EC" id="2.7.7.6"/>
    </reaction>
</comment>
<comment type="cofactor">
    <cofactor evidence="1">
        <name>Mg(2+)</name>
        <dbReference type="ChEBI" id="CHEBI:18420"/>
    </cofactor>
    <text evidence="1">Binds 1 Mg(2+) ion per subunit.</text>
</comment>
<comment type="cofactor">
    <cofactor evidence="1">
        <name>Zn(2+)</name>
        <dbReference type="ChEBI" id="CHEBI:29105"/>
    </cofactor>
    <text evidence="1">Binds 2 Zn(2+) ions per subunit.</text>
</comment>
<comment type="subunit">
    <text evidence="1">The RNAP catalytic core consists of 2 alpha, 1 beta, 1 beta' and 1 omega subunit. When a sigma factor is associated with the core the holoenzyme is formed, which can initiate transcription.</text>
</comment>
<comment type="similarity">
    <text evidence="1">Belongs to the RNA polymerase beta' chain family.</text>
</comment>
<keyword id="KW-0240">DNA-directed RNA polymerase</keyword>
<keyword id="KW-0460">Magnesium</keyword>
<keyword id="KW-0479">Metal-binding</keyword>
<keyword id="KW-0548">Nucleotidyltransferase</keyword>
<keyword id="KW-0804">Transcription</keyword>
<keyword id="KW-0808">Transferase</keyword>
<keyword id="KW-0862">Zinc</keyword>
<feature type="chain" id="PRO_0000308843" description="DNA-directed RNA polymerase subunit beta'">
    <location>
        <begin position="1"/>
        <end position="1223"/>
    </location>
</feature>
<feature type="binding site" evidence="1">
    <location>
        <position position="60"/>
    </location>
    <ligand>
        <name>Zn(2+)</name>
        <dbReference type="ChEBI" id="CHEBI:29105"/>
        <label>1</label>
    </ligand>
</feature>
<feature type="binding site" evidence="1">
    <location>
        <position position="62"/>
    </location>
    <ligand>
        <name>Zn(2+)</name>
        <dbReference type="ChEBI" id="CHEBI:29105"/>
        <label>1</label>
    </ligand>
</feature>
<feature type="binding site" evidence="1">
    <location>
        <position position="75"/>
    </location>
    <ligand>
        <name>Zn(2+)</name>
        <dbReference type="ChEBI" id="CHEBI:29105"/>
        <label>1</label>
    </ligand>
</feature>
<feature type="binding site" evidence="1">
    <location>
        <position position="78"/>
    </location>
    <ligand>
        <name>Zn(2+)</name>
        <dbReference type="ChEBI" id="CHEBI:29105"/>
        <label>1</label>
    </ligand>
</feature>
<feature type="binding site" evidence="1">
    <location>
        <position position="449"/>
    </location>
    <ligand>
        <name>Mg(2+)</name>
        <dbReference type="ChEBI" id="CHEBI:18420"/>
    </ligand>
</feature>
<feature type="binding site" evidence="1">
    <location>
        <position position="451"/>
    </location>
    <ligand>
        <name>Mg(2+)</name>
        <dbReference type="ChEBI" id="CHEBI:18420"/>
    </ligand>
</feature>
<feature type="binding site" evidence="1">
    <location>
        <position position="453"/>
    </location>
    <ligand>
        <name>Mg(2+)</name>
        <dbReference type="ChEBI" id="CHEBI:18420"/>
    </ligand>
</feature>
<feature type="binding site" evidence="1">
    <location>
        <position position="818"/>
    </location>
    <ligand>
        <name>Zn(2+)</name>
        <dbReference type="ChEBI" id="CHEBI:29105"/>
        <label>2</label>
    </ligand>
</feature>
<feature type="binding site" evidence="1">
    <location>
        <position position="892"/>
    </location>
    <ligand>
        <name>Zn(2+)</name>
        <dbReference type="ChEBI" id="CHEBI:29105"/>
        <label>2</label>
    </ligand>
</feature>
<feature type="binding site" evidence="1">
    <location>
        <position position="899"/>
    </location>
    <ligand>
        <name>Zn(2+)</name>
        <dbReference type="ChEBI" id="CHEBI:29105"/>
        <label>2</label>
    </ligand>
</feature>
<feature type="binding site" evidence="1">
    <location>
        <position position="902"/>
    </location>
    <ligand>
        <name>Zn(2+)</name>
        <dbReference type="ChEBI" id="CHEBI:29105"/>
        <label>2</label>
    </ligand>
</feature>
<organism>
    <name type="scientific">Lactobacillus gasseri (strain ATCC 33323 / DSM 20243 / BCRC 14619 / CIP 102991 / JCM 1131 / KCTC 3163 / NCIMB 11718 / NCTC 13722 / AM63)</name>
    <dbReference type="NCBI Taxonomy" id="324831"/>
    <lineage>
        <taxon>Bacteria</taxon>
        <taxon>Bacillati</taxon>
        <taxon>Bacillota</taxon>
        <taxon>Bacilli</taxon>
        <taxon>Lactobacillales</taxon>
        <taxon>Lactobacillaceae</taxon>
        <taxon>Lactobacillus</taxon>
    </lineage>
</organism>
<gene>
    <name evidence="1" type="primary">rpoC</name>
    <name type="ordered locus">LGAS_0285</name>
</gene>
<accession>Q046D1</accession>
<dbReference type="EC" id="2.7.7.6" evidence="1"/>
<dbReference type="EMBL" id="CP000413">
    <property type="protein sequence ID" value="ABJ59691.1"/>
    <property type="molecule type" value="Genomic_DNA"/>
</dbReference>
<dbReference type="RefSeq" id="WP_003656624.1">
    <property type="nucleotide sequence ID" value="NZ_WBMG01000001.1"/>
</dbReference>
<dbReference type="SMR" id="Q046D1"/>
<dbReference type="GeneID" id="29639179"/>
<dbReference type="KEGG" id="lga:LGAS_0285"/>
<dbReference type="HOGENOM" id="CLU_000524_3_0_9"/>
<dbReference type="BioCyc" id="LGAS324831:G1G6Y-283-MONOMER"/>
<dbReference type="Proteomes" id="UP000000664">
    <property type="component" value="Chromosome"/>
</dbReference>
<dbReference type="GO" id="GO:0000428">
    <property type="term" value="C:DNA-directed RNA polymerase complex"/>
    <property type="evidence" value="ECO:0007669"/>
    <property type="project" value="UniProtKB-KW"/>
</dbReference>
<dbReference type="GO" id="GO:0003677">
    <property type="term" value="F:DNA binding"/>
    <property type="evidence" value="ECO:0007669"/>
    <property type="project" value="UniProtKB-UniRule"/>
</dbReference>
<dbReference type="GO" id="GO:0003899">
    <property type="term" value="F:DNA-directed RNA polymerase activity"/>
    <property type="evidence" value="ECO:0007669"/>
    <property type="project" value="UniProtKB-UniRule"/>
</dbReference>
<dbReference type="GO" id="GO:0000287">
    <property type="term" value="F:magnesium ion binding"/>
    <property type="evidence" value="ECO:0007669"/>
    <property type="project" value="UniProtKB-UniRule"/>
</dbReference>
<dbReference type="GO" id="GO:0008270">
    <property type="term" value="F:zinc ion binding"/>
    <property type="evidence" value="ECO:0007669"/>
    <property type="project" value="UniProtKB-UniRule"/>
</dbReference>
<dbReference type="GO" id="GO:0006351">
    <property type="term" value="P:DNA-templated transcription"/>
    <property type="evidence" value="ECO:0007669"/>
    <property type="project" value="UniProtKB-UniRule"/>
</dbReference>
<dbReference type="CDD" id="cd02655">
    <property type="entry name" value="RNAP_beta'_C"/>
    <property type="match status" value="1"/>
</dbReference>
<dbReference type="CDD" id="cd01609">
    <property type="entry name" value="RNAP_beta'_N"/>
    <property type="match status" value="1"/>
</dbReference>
<dbReference type="FunFam" id="4.10.860.120:FF:000001">
    <property type="entry name" value="DNA-directed RNA polymerase subunit beta"/>
    <property type="match status" value="1"/>
</dbReference>
<dbReference type="Gene3D" id="1.10.132.30">
    <property type="match status" value="1"/>
</dbReference>
<dbReference type="Gene3D" id="1.10.150.390">
    <property type="match status" value="1"/>
</dbReference>
<dbReference type="Gene3D" id="1.10.1790.20">
    <property type="match status" value="1"/>
</dbReference>
<dbReference type="Gene3D" id="1.10.40.90">
    <property type="match status" value="1"/>
</dbReference>
<dbReference type="Gene3D" id="2.40.40.20">
    <property type="match status" value="1"/>
</dbReference>
<dbReference type="Gene3D" id="2.40.50.100">
    <property type="match status" value="1"/>
</dbReference>
<dbReference type="Gene3D" id="4.10.860.120">
    <property type="entry name" value="RNA polymerase II, clamp domain"/>
    <property type="match status" value="1"/>
</dbReference>
<dbReference type="Gene3D" id="1.10.274.100">
    <property type="entry name" value="RNA polymerase Rpb1, domain 3"/>
    <property type="match status" value="1"/>
</dbReference>
<dbReference type="HAMAP" id="MF_01322">
    <property type="entry name" value="RNApol_bact_RpoC"/>
    <property type="match status" value="1"/>
</dbReference>
<dbReference type="InterPro" id="IPR045867">
    <property type="entry name" value="DNA-dir_RpoC_beta_prime"/>
</dbReference>
<dbReference type="InterPro" id="IPR012754">
    <property type="entry name" value="DNA-dir_RpoC_beta_prime_bact"/>
</dbReference>
<dbReference type="InterPro" id="IPR000722">
    <property type="entry name" value="RNA_pol_asu"/>
</dbReference>
<dbReference type="InterPro" id="IPR006592">
    <property type="entry name" value="RNA_pol_N"/>
</dbReference>
<dbReference type="InterPro" id="IPR007080">
    <property type="entry name" value="RNA_pol_Rpb1_1"/>
</dbReference>
<dbReference type="InterPro" id="IPR007066">
    <property type="entry name" value="RNA_pol_Rpb1_3"/>
</dbReference>
<dbReference type="InterPro" id="IPR042102">
    <property type="entry name" value="RNA_pol_Rpb1_3_sf"/>
</dbReference>
<dbReference type="InterPro" id="IPR007083">
    <property type="entry name" value="RNA_pol_Rpb1_4"/>
</dbReference>
<dbReference type="InterPro" id="IPR007081">
    <property type="entry name" value="RNA_pol_Rpb1_5"/>
</dbReference>
<dbReference type="InterPro" id="IPR044893">
    <property type="entry name" value="RNA_pol_Rpb1_clamp_domain"/>
</dbReference>
<dbReference type="InterPro" id="IPR038120">
    <property type="entry name" value="Rpb1_funnel_sf"/>
</dbReference>
<dbReference type="NCBIfam" id="TIGR02386">
    <property type="entry name" value="rpoC_TIGR"/>
    <property type="match status" value="1"/>
</dbReference>
<dbReference type="PANTHER" id="PTHR19376">
    <property type="entry name" value="DNA-DIRECTED RNA POLYMERASE"/>
    <property type="match status" value="1"/>
</dbReference>
<dbReference type="PANTHER" id="PTHR19376:SF54">
    <property type="entry name" value="DNA-DIRECTED RNA POLYMERASE SUBUNIT BETA"/>
    <property type="match status" value="1"/>
</dbReference>
<dbReference type="Pfam" id="PF04997">
    <property type="entry name" value="RNA_pol_Rpb1_1"/>
    <property type="match status" value="1"/>
</dbReference>
<dbReference type="Pfam" id="PF00623">
    <property type="entry name" value="RNA_pol_Rpb1_2"/>
    <property type="match status" value="1"/>
</dbReference>
<dbReference type="Pfam" id="PF04983">
    <property type="entry name" value="RNA_pol_Rpb1_3"/>
    <property type="match status" value="1"/>
</dbReference>
<dbReference type="Pfam" id="PF05000">
    <property type="entry name" value="RNA_pol_Rpb1_4"/>
    <property type="match status" value="1"/>
</dbReference>
<dbReference type="Pfam" id="PF04998">
    <property type="entry name" value="RNA_pol_Rpb1_5"/>
    <property type="match status" value="1"/>
</dbReference>
<dbReference type="SMART" id="SM00663">
    <property type="entry name" value="RPOLA_N"/>
    <property type="match status" value="1"/>
</dbReference>
<dbReference type="SUPFAM" id="SSF64484">
    <property type="entry name" value="beta and beta-prime subunits of DNA dependent RNA-polymerase"/>
    <property type="match status" value="1"/>
</dbReference>
<reference key="1">
    <citation type="journal article" date="2006" name="Proc. Natl. Acad. Sci. U.S.A.">
        <title>Comparative genomics of the lactic acid bacteria.</title>
        <authorList>
            <person name="Makarova K.S."/>
            <person name="Slesarev A."/>
            <person name="Wolf Y.I."/>
            <person name="Sorokin A."/>
            <person name="Mirkin B."/>
            <person name="Koonin E.V."/>
            <person name="Pavlov A."/>
            <person name="Pavlova N."/>
            <person name="Karamychev V."/>
            <person name="Polouchine N."/>
            <person name="Shakhova V."/>
            <person name="Grigoriev I."/>
            <person name="Lou Y."/>
            <person name="Rohksar D."/>
            <person name="Lucas S."/>
            <person name="Huang K."/>
            <person name="Goodstein D.M."/>
            <person name="Hawkins T."/>
            <person name="Plengvidhya V."/>
            <person name="Welker D."/>
            <person name="Hughes J."/>
            <person name="Goh Y."/>
            <person name="Benson A."/>
            <person name="Baldwin K."/>
            <person name="Lee J.-H."/>
            <person name="Diaz-Muniz I."/>
            <person name="Dosti B."/>
            <person name="Smeianov V."/>
            <person name="Wechter W."/>
            <person name="Barabote R."/>
            <person name="Lorca G."/>
            <person name="Altermann E."/>
            <person name="Barrangou R."/>
            <person name="Ganesan B."/>
            <person name="Xie Y."/>
            <person name="Rawsthorne H."/>
            <person name="Tamir D."/>
            <person name="Parker C."/>
            <person name="Breidt F."/>
            <person name="Broadbent J.R."/>
            <person name="Hutkins R."/>
            <person name="O'Sullivan D."/>
            <person name="Steele J."/>
            <person name="Unlu G."/>
            <person name="Saier M.H. Jr."/>
            <person name="Klaenhammer T."/>
            <person name="Richardson P."/>
            <person name="Kozyavkin S."/>
            <person name="Weimer B.C."/>
            <person name="Mills D.A."/>
        </authorList>
    </citation>
    <scope>NUCLEOTIDE SEQUENCE [LARGE SCALE GENOMIC DNA]</scope>
    <source>
        <strain>ATCC 33323 / DSM 20243 / BCRC 14619 / CIP 102991 / JCM 1131 / KCTC 3163 / NCIMB 11718 / NCTC 13722 / AM63</strain>
    </source>
</reference>
<name>RPOC_LACGA</name>
<sequence length="1223" mass="136371">MIDVNKFESMQIGLASPNKIRSWSYGEVKKPETINYRTLKPEKDGLFDERIFGPTKDWSCACGKYKGIRYRGIVCDRCGVEVTSAKVRRERMGHIELAAPVSHIWYFKGIPSRMGLVLDISPRALEEVIYFAAYIVIDAGDTDLEDKQLLTEAEYREKKAKFGNRFEAKMGAEAVKELLEQVDIDKEVHDLKEELKTATGQKRTRAIRRLDILDAFKNSGNKPSWMVMDCIPVIPPDLRPMVQLDGGRFATSDLNDLYRRVINRNNRLKRLLDLNAPRIIVQNEKRMLQEAVDALIDNGRRGRPVVGPGNRPLKSLSHMLKGKQGRFRQNLLGKRVDYSGRSVIDVSPKLKFYQCGVPRPMALELFKPFVMHELVKRGLASNIKNAKRKIDREDDDIWDILEDVIKERPVLLNRAPTLHRLGIQAFEPVLVPGKSIRLHPLACEAYNADFDGDQMAIHVPLSDEAVAESRLLMLAAHHILAPKDGKPIVTPSQDIVLGNYWLTQAERGREGEGMIFDSPAEAAIAYANGDIHYHTRIGLAADSMPEKPWPKGYEHGIFVTTYGKLVFNQIFPKDFFYINDPTQENLTHPVDERYFLQPGEDIHEKLDNMKLGKAFKKGFLSDSIAQIYKDYKVQRTSDFLDDLKELGYTVCTTSGLTIGVEDIPTITDKDDIVAEARKKVDVVSKQYRRGLITDEERHDRVISIWNNCKDIVQNEIAQIHAPRNPITIMADSGARGNISNFTQLAGMRGLMAAPNGGMMEIPVTSNFREGLSVLEMFMSTHGARKGMTDTALKTANSGYLTRRLVDVAQDVIIREEDCGTDRGLTVHAITEGDEMIEPLFDRLVGRYTSKSVYDPETHEVICPADVLMDEDMAHKIVDAGVTEVTIRSVFTCNTQHGVCKKCYGMNLATGDDVEVGEAVGTVAAQSIGEPGTQLTMRNFHNGGVAGAADITQGLPRVQELFEARNPKGRATISEVTGEITSIEEDPAEHTRQITVKGQTDTRTYDVPYTASVAVAEGDHVVRGDKLTLGSIDPKELIRVRDALTTEKYILSEIQKAYRMQGVEIADKHVEVMARQMLQKVRILDPGETDILPGELMDIGEFKARNREVIISGGIPATAQSVILGITKAALETNSFLSAASFQETTRVLTDASIRGKNDPLLGLKENVIIGKIIPAGTGMPVYREMEPKVDVPEDEKKKSVYSIADIEKKLAAADAEKDKGSAD</sequence>
<protein>
    <recommendedName>
        <fullName evidence="1">DNA-directed RNA polymerase subunit beta'</fullName>
        <shortName evidence="1">RNAP subunit beta'</shortName>
        <ecNumber evidence="1">2.7.7.6</ecNumber>
    </recommendedName>
    <alternativeName>
        <fullName evidence="1">RNA polymerase subunit beta'</fullName>
    </alternativeName>
    <alternativeName>
        <fullName evidence="1">Transcriptase subunit beta'</fullName>
    </alternativeName>
</protein>
<proteinExistence type="inferred from homology"/>